<sequence>MAGGRHRRVVGTLHLLLLVAALPWASRGVSPSASAWPEEKNYHQPAILNSSALRQIAEGTSISEMWQNDLQPLLIERYPGSPGSYAARQHIMQRIQRLQADWVLEIDTFLSQTPYGYRSFSNIISTLNPTAKRHLVLACHYDSKYFSHWNNRVFVGATDSAVPCAMMLELARALDKKLLSLKTVSDSKPDLSLQLIFFDGEEAFLHWSPQDSLYGSRHLAAKMASTPHPPGARGTSQLHGMDLLVLLDLIGAPNPTFPNFFPNSARWFERLQAIEHELHELGLLKDHSLEGRYFQNYSYGGVIQDDHIPFLRRGVPVLHLIPSPFPEVWHTMDDNEENLDESTIDNLNKILQVFVLEYLHL</sequence>
<evidence type="ECO:0000250" key="1">
    <source>
        <dbReference type="UniProtKB" id="B7QK46"/>
    </source>
</evidence>
<evidence type="ECO:0000255" key="2"/>
<evidence type="ECO:0000269" key="3">
    <source>
    </source>
</evidence>
<evidence type="ECO:0000269" key="4">
    <source>
    </source>
</evidence>
<evidence type="ECO:0000269" key="5">
    <source>
    </source>
</evidence>
<evidence type="ECO:0000269" key="6">
    <source>
    </source>
</evidence>
<evidence type="ECO:0000269" key="7">
    <source>
    </source>
</evidence>
<evidence type="ECO:0000269" key="8">
    <source>
    </source>
</evidence>
<evidence type="ECO:0000269" key="9">
    <source>
    </source>
</evidence>
<evidence type="ECO:0000305" key="10"/>
<evidence type="ECO:0007744" key="11">
    <source>
        <dbReference type="PDB" id="2AFM"/>
    </source>
</evidence>
<evidence type="ECO:0007744" key="12">
    <source>
        <dbReference type="PDB" id="2AFO"/>
    </source>
</evidence>
<evidence type="ECO:0007744" key="13">
    <source>
        <dbReference type="PDB" id="2AFS"/>
    </source>
</evidence>
<evidence type="ECO:0007744" key="14">
    <source>
        <dbReference type="PDB" id="2AFU"/>
    </source>
</evidence>
<evidence type="ECO:0007744" key="15">
    <source>
        <dbReference type="PDB" id="2AFW"/>
    </source>
</evidence>
<evidence type="ECO:0007744" key="16">
    <source>
        <dbReference type="PDB" id="2AFX"/>
    </source>
</evidence>
<evidence type="ECO:0007744" key="17">
    <source>
        <dbReference type="PDB" id="2AFZ"/>
    </source>
</evidence>
<evidence type="ECO:0007744" key="18">
    <source>
        <dbReference type="PDB" id="2ZED"/>
    </source>
</evidence>
<evidence type="ECO:0007744" key="19">
    <source>
        <dbReference type="PDB" id="2ZEE"/>
    </source>
</evidence>
<evidence type="ECO:0007744" key="20">
    <source>
        <dbReference type="PDB" id="2ZEF"/>
    </source>
</evidence>
<evidence type="ECO:0007744" key="21">
    <source>
        <dbReference type="PDB" id="2ZEG"/>
    </source>
</evidence>
<evidence type="ECO:0007744" key="22">
    <source>
        <dbReference type="PDB" id="2ZEH"/>
    </source>
</evidence>
<evidence type="ECO:0007744" key="23">
    <source>
        <dbReference type="PDB" id="2ZEL"/>
    </source>
</evidence>
<evidence type="ECO:0007744" key="24">
    <source>
        <dbReference type="PDB" id="2ZEM"/>
    </source>
</evidence>
<evidence type="ECO:0007744" key="25">
    <source>
        <dbReference type="PDB" id="2ZEN"/>
    </source>
</evidence>
<evidence type="ECO:0007744" key="26">
    <source>
        <dbReference type="PDB" id="2ZEO"/>
    </source>
</evidence>
<evidence type="ECO:0007744" key="27">
    <source>
        <dbReference type="PDB" id="2ZEP"/>
    </source>
</evidence>
<evidence type="ECO:0007744" key="28">
    <source>
        <dbReference type="PDB" id="3PBB"/>
    </source>
</evidence>
<evidence type="ECO:0007744" key="29">
    <source>
        <dbReference type="PDB" id="3PBE"/>
    </source>
</evidence>
<evidence type="ECO:0007744" key="30">
    <source>
        <dbReference type="PDB" id="3SI0"/>
    </source>
</evidence>
<evidence type="ECO:0007744" key="31">
    <source>
        <dbReference type="PDB" id="4YU9"/>
    </source>
</evidence>
<evidence type="ECO:0007744" key="32">
    <source>
        <dbReference type="PDB" id="4YWY"/>
    </source>
</evidence>
<evidence type="ECO:0007829" key="33">
    <source>
        <dbReference type="PDB" id="2AFM"/>
    </source>
</evidence>
<evidence type="ECO:0007829" key="34">
    <source>
        <dbReference type="PDB" id="2AFW"/>
    </source>
</evidence>
<evidence type="ECO:0007829" key="35">
    <source>
        <dbReference type="PDB" id="3PBB"/>
    </source>
</evidence>
<evidence type="ECO:0007829" key="36">
    <source>
        <dbReference type="PDB" id="3SI0"/>
    </source>
</evidence>
<evidence type="ECO:0007829" key="37">
    <source>
        <dbReference type="PDB" id="7CP0"/>
    </source>
</evidence>
<evidence type="ECO:0007829" key="38">
    <source>
        <dbReference type="PDB" id="7D8E"/>
    </source>
</evidence>
<reference key="1">
    <citation type="journal article" date="1994" name="J. Mol. Endocrinol.">
        <title>Molecular cloning, sequence analysis and expression of human pituitary glutaminyl cyclase.</title>
        <authorList>
            <person name="Song I."/>
            <person name="Chuang C.Z."/>
            <person name="Bateman R.C. Jr."/>
        </authorList>
    </citation>
    <scope>NUCLEOTIDE SEQUENCE [MRNA] (ISOFORM 1)</scope>
    <source>
        <tissue>Pituitary</tissue>
    </source>
</reference>
<reference key="2">
    <citation type="journal article" date="2004" name="Nat. Genet.">
        <title>Complete sequencing and characterization of 21,243 full-length human cDNAs.</title>
        <authorList>
            <person name="Ota T."/>
            <person name="Suzuki Y."/>
            <person name="Nishikawa T."/>
            <person name="Otsuki T."/>
            <person name="Sugiyama T."/>
            <person name="Irie R."/>
            <person name="Wakamatsu A."/>
            <person name="Hayashi K."/>
            <person name="Sato H."/>
            <person name="Nagai K."/>
            <person name="Kimura K."/>
            <person name="Makita H."/>
            <person name="Sekine M."/>
            <person name="Obayashi M."/>
            <person name="Nishi T."/>
            <person name="Shibahara T."/>
            <person name="Tanaka T."/>
            <person name="Ishii S."/>
            <person name="Yamamoto J."/>
            <person name="Saito K."/>
            <person name="Kawai Y."/>
            <person name="Isono Y."/>
            <person name="Nakamura Y."/>
            <person name="Nagahari K."/>
            <person name="Murakami K."/>
            <person name="Yasuda T."/>
            <person name="Iwayanagi T."/>
            <person name="Wagatsuma M."/>
            <person name="Shiratori A."/>
            <person name="Sudo H."/>
            <person name="Hosoiri T."/>
            <person name="Kaku Y."/>
            <person name="Kodaira H."/>
            <person name="Kondo H."/>
            <person name="Sugawara M."/>
            <person name="Takahashi M."/>
            <person name="Kanda K."/>
            <person name="Yokoi T."/>
            <person name="Furuya T."/>
            <person name="Kikkawa E."/>
            <person name="Omura Y."/>
            <person name="Abe K."/>
            <person name="Kamihara K."/>
            <person name="Katsuta N."/>
            <person name="Sato K."/>
            <person name="Tanikawa M."/>
            <person name="Yamazaki M."/>
            <person name="Ninomiya K."/>
            <person name="Ishibashi T."/>
            <person name="Yamashita H."/>
            <person name="Murakawa K."/>
            <person name="Fujimori K."/>
            <person name="Tanai H."/>
            <person name="Kimata M."/>
            <person name="Watanabe M."/>
            <person name="Hiraoka S."/>
            <person name="Chiba Y."/>
            <person name="Ishida S."/>
            <person name="Ono Y."/>
            <person name="Takiguchi S."/>
            <person name="Watanabe S."/>
            <person name="Yosida M."/>
            <person name="Hotuta T."/>
            <person name="Kusano J."/>
            <person name="Kanehori K."/>
            <person name="Takahashi-Fujii A."/>
            <person name="Hara H."/>
            <person name="Tanase T.-O."/>
            <person name="Nomura Y."/>
            <person name="Togiya S."/>
            <person name="Komai F."/>
            <person name="Hara R."/>
            <person name="Takeuchi K."/>
            <person name="Arita M."/>
            <person name="Imose N."/>
            <person name="Musashino K."/>
            <person name="Yuuki H."/>
            <person name="Oshima A."/>
            <person name="Sasaki N."/>
            <person name="Aotsuka S."/>
            <person name="Yoshikawa Y."/>
            <person name="Matsunawa H."/>
            <person name="Ichihara T."/>
            <person name="Shiohata N."/>
            <person name="Sano S."/>
            <person name="Moriya S."/>
            <person name="Momiyama H."/>
            <person name="Satoh N."/>
            <person name="Takami S."/>
            <person name="Terashima Y."/>
            <person name="Suzuki O."/>
            <person name="Nakagawa S."/>
            <person name="Senoh A."/>
            <person name="Mizoguchi H."/>
            <person name="Goto Y."/>
            <person name="Shimizu F."/>
            <person name="Wakebe H."/>
            <person name="Hishigaki H."/>
            <person name="Watanabe T."/>
            <person name="Sugiyama A."/>
            <person name="Takemoto M."/>
            <person name="Kawakami B."/>
            <person name="Yamazaki M."/>
            <person name="Watanabe K."/>
            <person name="Kumagai A."/>
            <person name="Itakura S."/>
            <person name="Fukuzumi Y."/>
            <person name="Fujimori Y."/>
            <person name="Komiyama M."/>
            <person name="Tashiro H."/>
            <person name="Tanigami A."/>
            <person name="Fujiwara T."/>
            <person name="Ono T."/>
            <person name="Yamada K."/>
            <person name="Fujii Y."/>
            <person name="Ozaki K."/>
            <person name="Hirao M."/>
            <person name="Ohmori Y."/>
            <person name="Kawabata A."/>
            <person name="Hikiji T."/>
            <person name="Kobatake N."/>
            <person name="Inagaki H."/>
            <person name="Ikema Y."/>
            <person name="Okamoto S."/>
            <person name="Okitani R."/>
            <person name="Kawakami T."/>
            <person name="Noguchi S."/>
            <person name="Itoh T."/>
            <person name="Shigeta K."/>
            <person name="Senba T."/>
            <person name="Matsumura K."/>
            <person name="Nakajima Y."/>
            <person name="Mizuno T."/>
            <person name="Morinaga M."/>
            <person name="Sasaki M."/>
            <person name="Togashi T."/>
            <person name="Oyama M."/>
            <person name="Hata H."/>
            <person name="Watanabe M."/>
            <person name="Komatsu T."/>
            <person name="Mizushima-Sugano J."/>
            <person name="Satoh T."/>
            <person name="Shirai Y."/>
            <person name="Takahashi Y."/>
            <person name="Nakagawa K."/>
            <person name="Okumura K."/>
            <person name="Nagase T."/>
            <person name="Nomura N."/>
            <person name="Kikuchi H."/>
            <person name="Masuho Y."/>
            <person name="Yamashita R."/>
            <person name="Nakai K."/>
            <person name="Yada T."/>
            <person name="Nakamura Y."/>
            <person name="Ohara O."/>
            <person name="Isogai T."/>
            <person name="Sugano S."/>
        </authorList>
    </citation>
    <scope>NUCLEOTIDE SEQUENCE [LARGE SCALE MRNA] (ISOFORM 1)</scope>
    <source>
        <tissue>Heart</tissue>
    </source>
</reference>
<reference key="3">
    <citation type="journal article" date="2005" name="Nature">
        <title>Generation and annotation of the DNA sequences of human chromosomes 2 and 4.</title>
        <authorList>
            <person name="Hillier L.W."/>
            <person name="Graves T.A."/>
            <person name="Fulton R.S."/>
            <person name="Fulton L.A."/>
            <person name="Pepin K.H."/>
            <person name="Minx P."/>
            <person name="Wagner-McPherson C."/>
            <person name="Layman D."/>
            <person name="Wylie K."/>
            <person name="Sekhon M."/>
            <person name="Becker M.C."/>
            <person name="Fewell G.A."/>
            <person name="Delehaunty K.D."/>
            <person name="Miner T.L."/>
            <person name="Nash W.E."/>
            <person name="Kremitzki C."/>
            <person name="Oddy L."/>
            <person name="Du H."/>
            <person name="Sun H."/>
            <person name="Bradshaw-Cordum H."/>
            <person name="Ali J."/>
            <person name="Carter J."/>
            <person name="Cordes M."/>
            <person name="Harris A."/>
            <person name="Isak A."/>
            <person name="van Brunt A."/>
            <person name="Nguyen C."/>
            <person name="Du F."/>
            <person name="Courtney L."/>
            <person name="Kalicki J."/>
            <person name="Ozersky P."/>
            <person name="Abbott S."/>
            <person name="Armstrong J."/>
            <person name="Belter E.A."/>
            <person name="Caruso L."/>
            <person name="Cedroni M."/>
            <person name="Cotton M."/>
            <person name="Davidson T."/>
            <person name="Desai A."/>
            <person name="Elliott G."/>
            <person name="Erb T."/>
            <person name="Fronick C."/>
            <person name="Gaige T."/>
            <person name="Haakenson W."/>
            <person name="Haglund K."/>
            <person name="Holmes A."/>
            <person name="Harkins R."/>
            <person name="Kim K."/>
            <person name="Kruchowski S.S."/>
            <person name="Strong C.M."/>
            <person name="Grewal N."/>
            <person name="Goyea E."/>
            <person name="Hou S."/>
            <person name="Levy A."/>
            <person name="Martinka S."/>
            <person name="Mead K."/>
            <person name="McLellan M.D."/>
            <person name="Meyer R."/>
            <person name="Randall-Maher J."/>
            <person name="Tomlinson C."/>
            <person name="Dauphin-Kohlberg S."/>
            <person name="Kozlowicz-Reilly A."/>
            <person name="Shah N."/>
            <person name="Swearengen-Shahid S."/>
            <person name="Snider J."/>
            <person name="Strong J.T."/>
            <person name="Thompson J."/>
            <person name="Yoakum M."/>
            <person name="Leonard S."/>
            <person name="Pearman C."/>
            <person name="Trani L."/>
            <person name="Radionenko M."/>
            <person name="Waligorski J.E."/>
            <person name="Wang C."/>
            <person name="Rock S.M."/>
            <person name="Tin-Wollam A.-M."/>
            <person name="Maupin R."/>
            <person name="Latreille P."/>
            <person name="Wendl M.C."/>
            <person name="Yang S.-P."/>
            <person name="Pohl C."/>
            <person name="Wallis J.W."/>
            <person name="Spieth J."/>
            <person name="Bieri T.A."/>
            <person name="Berkowicz N."/>
            <person name="Nelson J.O."/>
            <person name="Osborne J."/>
            <person name="Ding L."/>
            <person name="Meyer R."/>
            <person name="Sabo A."/>
            <person name="Shotland Y."/>
            <person name="Sinha P."/>
            <person name="Wohldmann P.E."/>
            <person name="Cook L.L."/>
            <person name="Hickenbotham M.T."/>
            <person name="Eldred J."/>
            <person name="Williams D."/>
            <person name="Jones T.A."/>
            <person name="She X."/>
            <person name="Ciccarelli F.D."/>
            <person name="Izaurralde E."/>
            <person name="Taylor J."/>
            <person name="Schmutz J."/>
            <person name="Myers R.M."/>
            <person name="Cox D.R."/>
            <person name="Huang X."/>
            <person name="McPherson J.D."/>
            <person name="Mardis E.R."/>
            <person name="Clifton S.W."/>
            <person name="Warren W.C."/>
            <person name="Chinwalla A.T."/>
            <person name="Eddy S.R."/>
            <person name="Marra M.A."/>
            <person name="Ovcharenko I."/>
            <person name="Furey T.S."/>
            <person name="Miller W."/>
            <person name="Eichler E.E."/>
            <person name="Bork P."/>
            <person name="Suyama M."/>
            <person name="Torrents D."/>
            <person name="Waterston R.H."/>
            <person name="Wilson R.K."/>
        </authorList>
    </citation>
    <scope>NUCLEOTIDE SEQUENCE [LARGE SCALE GENOMIC DNA]</scope>
</reference>
<reference key="4">
    <citation type="submission" date="2005-09" db="EMBL/GenBank/DDBJ databases">
        <authorList>
            <person name="Mural R.J."/>
            <person name="Istrail S."/>
            <person name="Sutton G."/>
            <person name="Florea L."/>
            <person name="Halpern A.L."/>
            <person name="Mobarry C.M."/>
            <person name="Lippert R."/>
            <person name="Walenz B."/>
            <person name="Shatkay H."/>
            <person name="Dew I."/>
            <person name="Miller J.R."/>
            <person name="Flanigan M.J."/>
            <person name="Edwards N.J."/>
            <person name="Bolanos R."/>
            <person name="Fasulo D."/>
            <person name="Halldorsson B.V."/>
            <person name="Hannenhalli S."/>
            <person name="Turner R."/>
            <person name="Yooseph S."/>
            <person name="Lu F."/>
            <person name="Nusskern D.R."/>
            <person name="Shue B.C."/>
            <person name="Zheng X.H."/>
            <person name="Zhong F."/>
            <person name="Delcher A.L."/>
            <person name="Huson D.H."/>
            <person name="Kravitz S.A."/>
            <person name="Mouchard L."/>
            <person name="Reinert K."/>
            <person name="Remington K.A."/>
            <person name="Clark A.G."/>
            <person name="Waterman M.S."/>
            <person name="Eichler E.E."/>
            <person name="Adams M.D."/>
            <person name="Hunkapiller M.W."/>
            <person name="Myers E.W."/>
            <person name="Venter J.C."/>
        </authorList>
    </citation>
    <scope>NUCLEOTIDE SEQUENCE [LARGE SCALE GENOMIC DNA]</scope>
</reference>
<reference key="5">
    <citation type="journal article" date="2004" name="Genome Res.">
        <title>The status, quality, and expansion of the NIH full-length cDNA project: the Mammalian Gene Collection (MGC).</title>
        <authorList>
            <consortium name="The MGC Project Team"/>
        </authorList>
    </citation>
    <scope>NUCLEOTIDE SEQUENCE [LARGE SCALE MRNA] (ISOFORM 1)</scope>
    <scope>VARIANT PRO-360</scope>
    <source>
        <tissue>Lung</tissue>
        <tissue>Pancreas</tissue>
    </source>
</reference>
<reference key="6">
    <citation type="journal article" date="2004" name="FEBS Lett.">
        <title>Glutaminyl cyclases unfold glutamyl cyclase activity under mild acid conditions.</title>
        <authorList>
            <person name="Schilling S."/>
            <person name="Hoffmann T."/>
            <person name="Manhart S."/>
            <person name="Hoffmann M."/>
            <person name="Demuth H.U."/>
        </authorList>
    </citation>
    <scope>FUNCTION AS GLUTAMYL CYCLASE</scope>
</reference>
<reference key="7">
    <citation type="journal article" date="2008" name="J. Mol. Biol.">
        <title>Isolation of an isoenzyme of human glutaminyl cyclase: retention in the Golgi complex suggests involvement in the protein maturation machinery.</title>
        <authorList>
            <person name="Cynis H."/>
            <person name="Rahfeld J.U."/>
            <person name="Stephan A."/>
            <person name="Kehlen A."/>
            <person name="Koch B."/>
            <person name="Wermann M."/>
            <person name="Demuth H.U."/>
            <person name="Schilling S."/>
        </authorList>
    </citation>
    <scope>FUNCTION</scope>
    <scope>CATALYTIC ACTIVITY</scope>
    <scope>SUBCELLULAR LOCATION</scope>
</reference>
<reference key="8">
    <citation type="journal article" date="2005" name="Proc. Natl. Acad. Sci. U.S.A.">
        <title>Crystal structures of human glutaminyl cyclase, an enzyme responsible for protein N-terminal pyroglutamate formation.</title>
        <authorList>
            <person name="Huang K.-F."/>
            <person name="Liu Y.-L."/>
            <person name="Cheng W.-J."/>
            <person name="Ko T.-P."/>
            <person name="Wang A.H.-J."/>
        </authorList>
    </citation>
    <scope>X-RAY CRYSTALLOGRAPHY (1.66 ANGSTROMS) OF 33-361 IN COMPLEX WITH ZINC</scope>
    <scope>CATALYTIC ACTIVITY</scope>
    <scope>MUTAGENESIS OF LYS-144; PHE-146; GLU-201; TRP-207; ASP-248; GLN-304; ASP-305; PHE-325 AND TRP-329</scope>
    <scope>CHARACTERIZATION OF VARIANT TRP-54</scope>
</reference>
<reference key="9">
    <citation type="journal article" date="2008" name="Biochem. J.">
        <title>A conserved hydrogen-bond network in the catalytic centre of animal glutaminyl cyclases is critical for catalysis.</title>
        <authorList>
            <person name="Huang K.F."/>
            <person name="Wang Y.R."/>
            <person name="Chang E.C."/>
            <person name="Chou T.L."/>
            <person name="Wang A.H."/>
        </authorList>
    </citation>
    <scope>X-RAY CRYSTALLOGRAPHY (1.66 ANGSTROMS) OF 33-361 OF MUTANTS ALA-160; GLY-160; ASP-201; LEU-201; GLN-201; ALA-248; GLN-248; ALA-305; GLU-305 AND LEU-319 IN COMPLEX WITH ZINC</scope>
    <scope>CATALYTIC ACTIVITY</scope>
    <scope>ACTIVE SITE</scope>
    <scope>MUTAGENESIS OF SER-160; GLU-201; ASP-248; ASP-305 AND HIS-319</scope>
</reference>
<reference key="10">
    <citation type="journal article" date="2011" name="Biochemistry">
        <title>Structures of glycosylated mammalian glutaminyl cyclases reveal conformational variability near the active center.</title>
        <authorList>
            <person name="Ruiz-Carrillo D."/>
            <person name="Koch B."/>
            <person name="Parthier C."/>
            <person name="Wermann M."/>
            <person name="Dambe T."/>
            <person name="Buchholz M."/>
            <person name="Ludwig H.H."/>
            <person name="Heiser U."/>
            <person name="Rahfeld J.U."/>
            <person name="Stubbs M.T."/>
            <person name="Schilling S."/>
            <person name="Demuth H.U."/>
        </authorList>
    </citation>
    <scope>X-RAY CRYSTALLOGRAPHY (2.1 ANGSTROMS) OF 38-361 IN COMPLEX WITH ZINC</scope>
    <scope>GLYCOSYLATION AT ASN-49</scope>
    <scope>DISULFIDE BOND</scope>
</reference>
<reference key="11">
    <citation type="journal article" date="2011" name="J. Biol. Chem.">
        <title>Structures of human Golgi-resident glutaminyl cyclase and its complexes with inhibitors reveal a large loop movement upon inhibitor binding.</title>
        <authorList>
            <person name="Huang K.F."/>
            <person name="Liaw S.S."/>
            <person name="Huang W.L."/>
            <person name="Chia C.Y."/>
            <person name="Lo Y.C."/>
            <person name="Chen Y.L."/>
            <person name="Wang A.H."/>
        </authorList>
    </citation>
    <scope>X-RAY CRYSTALLOGRAPHY (1.95 ANGSTROMS) OF 33-361 IN COMPLEX WITH ZINC</scope>
    <scope>FUNCTION</scope>
    <scope>CATALYTIC ACTIVITY</scope>
</reference>
<comment type="function">
    <text evidence="3 7 8">Responsible for the biosynthesis of pyroglutamyl peptides. Has a bias against acidic and tryptophan residues adjacent to the N-terminal glutaminyl residue and a lack of importance of chain length after the second residue. Also catalyzes N-terminal pyroglutamate formation. In vitro, catalyzes pyroglutamate formation of N-terminally truncated form of APP amyloid-beta peptides [Glu-3]-amyloid-beta. May be involved in the N-terminal pyroglutamate formation of several amyloid-related plaque-forming peptides.</text>
</comment>
<comment type="catalytic activity">
    <reaction evidence="5 6 7 8">
        <text>N-terminal L-glutaminyl-[peptide] = N-terminal 5-oxo-L-prolyl-[peptide] + NH4(+)</text>
        <dbReference type="Rhea" id="RHEA:23652"/>
        <dbReference type="Rhea" id="RHEA-COMP:11736"/>
        <dbReference type="Rhea" id="RHEA-COMP:11846"/>
        <dbReference type="ChEBI" id="CHEBI:28938"/>
        <dbReference type="ChEBI" id="CHEBI:64722"/>
        <dbReference type="ChEBI" id="CHEBI:87215"/>
        <dbReference type="EC" id="2.3.2.5"/>
    </reaction>
</comment>
<comment type="interaction">
    <interactant intactId="EBI-2856807">
        <id>Q16769</id>
    </interactant>
    <interactant intactId="EBI-947187">
        <id>Q9UHD9</id>
        <label>UBQLN2</label>
    </interactant>
    <organismsDiffer>false</organismsDiffer>
    <experiments>3</experiments>
</comment>
<comment type="subcellular location">
    <subcellularLocation>
        <location evidence="7">Secreted</location>
    </subcellularLocation>
</comment>
<comment type="alternative products">
    <event type="alternative splicing"/>
    <isoform>
        <id>Q16769-1</id>
        <name>1</name>
        <sequence type="displayed"/>
    </isoform>
    <isoform>
        <id>Q16769-2</id>
        <name>2</name>
        <sequence type="described" ref="VSP_038487"/>
    </isoform>
</comment>
<comment type="similarity">
    <text evidence="10">Belongs to the glutaminyl-peptide cyclotransferase family.</text>
</comment>
<comment type="caution">
    <text evidence="1 6 8 10">It is unclear whether this protein requires a metal cofactor for catalysis. It was originally proposed to be a Zn(2+)-dependent metalloenzyme based on structural similarities to bacterial aminopeptidases and the observation that it can bind Zn(2+) ions, typically in a 1:1 stoichiometry (PubMed:18072935, PubMed:21288892). However, a recent study suggests a Zn(2+)-independent catalytic mechanism (By similarity).</text>
</comment>
<organism>
    <name type="scientific">Homo sapiens</name>
    <name type="common">Human</name>
    <dbReference type="NCBI Taxonomy" id="9606"/>
    <lineage>
        <taxon>Eukaryota</taxon>
        <taxon>Metazoa</taxon>
        <taxon>Chordata</taxon>
        <taxon>Craniata</taxon>
        <taxon>Vertebrata</taxon>
        <taxon>Euteleostomi</taxon>
        <taxon>Mammalia</taxon>
        <taxon>Eutheria</taxon>
        <taxon>Euarchontoglires</taxon>
        <taxon>Primates</taxon>
        <taxon>Haplorrhini</taxon>
        <taxon>Catarrhini</taxon>
        <taxon>Hominidae</taxon>
        <taxon>Homo</taxon>
    </lineage>
</organism>
<dbReference type="EC" id="2.3.2.5"/>
<dbReference type="EMBL" id="X71125">
    <property type="protein sequence ID" value="CAA50438.1"/>
    <property type="molecule type" value="mRNA"/>
</dbReference>
<dbReference type="EMBL" id="X67731">
    <property type="protein sequence ID" value="CAA47961.1"/>
    <property type="molecule type" value="mRNA"/>
</dbReference>
<dbReference type="EMBL" id="AK290605">
    <property type="protein sequence ID" value="BAF83294.1"/>
    <property type="molecule type" value="mRNA"/>
</dbReference>
<dbReference type="EMBL" id="AC007391">
    <property type="protein sequence ID" value="AAY14804.1"/>
    <property type="molecule type" value="Genomic_DNA"/>
</dbReference>
<dbReference type="EMBL" id="CH471053">
    <property type="protein sequence ID" value="EAX00392.1"/>
    <property type="molecule type" value="Genomic_DNA"/>
</dbReference>
<dbReference type="EMBL" id="CH471053">
    <property type="protein sequence ID" value="EAX00394.1"/>
    <property type="molecule type" value="Genomic_DNA"/>
</dbReference>
<dbReference type="EMBL" id="CH471053">
    <property type="protein sequence ID" value="EAX00396.1"/>
    <property type="molecule type" value="Genomic_DNA"/>
</dbReference>
<dbReference type="EMBL" id="BC036721">
    <property type="protein sequence ID" value="AAH36721.1"/>
    <property type="molecule type" value="mRNA"/>
</dbReference>
<dbReference type="EMBL" id="BC047756">
    <property type="protein sequence ID" value="AAH47756.1"/>
    <property type="molecule type" value="mRNA"/>
</dbReference>
<dbReference type="CCDS" id="CCDS1790.1">
    <molecule id="Q16769-1"/>
</dbReference>
<dbReference type="PIR" id="I37421">
    <property type="entry name" value="I37421"/>
</dbReference>
<dbReference type="RefSeq" id="NP_036545.1">
    <molecule id="Q16769-1"/>
    <property type="nucleotide sequence ID" value="NM_012413.4"/>
</dbReference>
<dbReference type="PDB" id="2AFM">
    <property type="method" value="X-ray"/>
    <property type="resolution" value="1.66 A"/>
    <property type="chains" value="A/B=33-361"/>
</dbReference>
<dbReference type="PDB" id="2AFO">
    <property type="method" value="X-ray"/>
    <property type="resolution" value="2.35 A"/>
    <property type="chains" value="A/B=33-361"/>
</dbReference>
<dbReference type="PDB" id="2AFS">
    <property type="method" value="X-ray"/>
    <property type="resolution" value="2.22 A"/>
    <property type="chains" value="A/B=33-361"/>
</dbReference>
<dbReference type="PDB" id="2AFU">
    <property type="method" value="X-ray"/>
    <property type="resolution" value="2.22 A"/>
    <property type="chains" value="A/B=33-361"/>
</dbReference>
<dbReference type="PDB" id="2AFW">
    <property type="method" value="X-ray"/>
    <property type="resolution" value="1.56 A"/>
    <property type="chains" value="A/B=33-361"/>
</dbReference>
<dbReference type="PDB" id="2AFX">
    <property type="method" value="X-ray"/>
    <property type="resolution" value="1.64 A"/>
    <property type="chains" value="A/B=33-361"/>
</dbReference>
<dbReference type="PDB" id="2AFZ">
    <property type="method" value="X-ray"/>
    <property type="resolution" value="1.68 A"/>
    <property type="chains" value="A/B=33-361"/>
</dbReference>
<dbReference type="PDB" id="2ZED">
    <property type="method" value="X-ray"/>
    <property type="resolution" value="1.70 A"/>
    <property type="chains" value="A/B=33-361"/>
</dbReference>
<dbReference type="PDB" id="2ZEE">
    <property type="method" value="X-ray"/>
    <property type="resolution" value="1.99 A"/>
    <property type="chains" value="A/B=33-361"/>
</dbReference>
<dbReference type="PDB" id="2ZEF">
    <property type="method" value="X-ray"/>
    <property type="resolution" value="1.67 A"/>
    <property type="chains" value="A/B=33-361"/>
</dbReference>
<dbReference type="PDB" id="2ZEG">
    <property type="method" value="X-ray"/>
    <property type="resolution" value="2.08 A"/>
    <property type="chains" value="A/B=33-361"/>
</dbReference>
<dbReference type="PDB" id="2ZEH">
    <property type="method" value="X-ray"/>
    <property type="resolution" value="1.80 A"/>
    <property type="chains" value="A/B=33-361"/>
</dbReference>
<dbReference type="PDB" id="2ZEL">
    <property type="method" value="X-ray"/>
    <property type="resolution" value="1.97 A"/>
    <property type="chains" value="A/B=33-361"/>
</dbReference>
<dbReference type="PDB" id="2ZEM">
    <property type="method" value="X-ray"/>
    <property type="resolution" value="2.18 A"/>
    <property type="chains" value="A/B=33-361"/>
</dbReference>
<dbReference type="PDB" id="2ZEN">
    <property type="method" value="X-ray"/>
    <property type="resolution" value="1.78 A"/>
    <property type="chains" value="A/B=33-361"/>
</dbReference>
<dbReference type="PDB" id="2ZEO">
    <property type="method" value="X-ray"/>
    <property type="resolution" value="1.66 A"/>
    <property type="chains" value="A/B=33-361"/>
</dbReference>
<dbReference type="PDB" id="2ZEP">
    <property type="method" value="X-ray"/>
    <property type="resolution" value="2.10 A"/>
    <property type="chains" value="A/B=33-361"/>
</dbReference>
<dbReference type="PDB" id="3PBB">
    <property type="method" value="X-ray"/>
    <property type="resolution" value="1.95 A"/>
    <property type="chains" value="A/B=33-361"/>
</dbReference>
<dbReference type="PDB" id="3PBE">
    <property type="method" value="X-ray"/>
    <property type="resolution" value="1.95 A"/>
    <property type="chains" value="A/B=33-361"/>
</dbReference>
<dbReference type="PDB" id="3SI0">
    <property type="method" value="X-ray"/>
    <property type="resolution" value="2.10 A"/>
    <property type="chains" value="A=38-361"/>
</dbReference>
<dbReference type="PDB" id="4YU9">
    <property type="method" value="X-ray"/>
    <property type="resolution" value="2.10 A"/>
    <property type="chains" value="A/B/C=33-361"/>
</dbReference>
<dbReference type="PDB" id="4YWY">
    <property type="method" value="X-ray"/>
    <property type="resolution" value="1.95 A"/>
    <property type="chains" value="A/B/C=1-361"/>
</dbReference>
<dbReference type="PDB" id="6GBX">
    <property type="method" value="X-ray"/>
    <property type="resolution" value="1.72 A"/>
    <property type="chains" value="A/B/C=33-361"/>
</dbReference>
<dbReference type="PDB" id="6YI1">
    <property type="method" value="X-ray"/>
    <property type="resolution" value="1.92 A"/>
    <property type="chains" value="A/B=35-361"/>
</dbReference>
<dbReference type="PDB" id="6YJY">
    <property type="method" value="X-ray"/>
    <property type="resolution" value="1.67 A"/>
    <property type="chains" value="A/B=35-361"/>
</dbReference>
<dbReference type="PDB" id="7CM0">
    <property type="method" value="X-ray"/>
    <property type="resolution" value="2.20 A"/>
    <property type="chains" value="A/B/C/D=35-361"/>
</dbReference>
<dbReference type="PDB" id="7COZ">
    <property type="method" value="X-ray"/>
    <property type="resolution" value="1.85 A"/>
    <property type="chains" value="A/B/C=35-361"/>
</dbReference>
<dbReference type="PDB" id="7CP0">
    <property type="method" value="X-ray"/>
    <property type="resolution" value="1.70 A"/>
    <property type="chains" value="A/B/C=35-361"/>
</dbReference>
<dbReference type="PDB" id="7D8E">
    <property type="method" value="X-ray"/>
    <property type="resolution" value="2.00 A"/>
    <property type="chains" value="A/B/C=33-361"/>
</dbReference>
<dbReference type="PDB" id="8HY3">
    <property type="method" value="X-ray"/>
    <property type="resolution" value="1.95 A"/>
    <property type="chains" value="A=33-361"/>
</dbReference>
<dbReference type="PDB" id="8XGB">
    <property type="method" value="X-ray"/>
    <property type="resolution" value="3.24 A"/>
    <property type="chains" value="B=32-361"/>
</dbReference>
<dbReference type="PDB" id="8XGT">
    <property type="method" value="X-ray"/>
    <property type="resolution" value="2.81 A"/>
    <property type="chains" value="A/B/C/D/E/F/G/H/I/J/K/L=33-361"/>
</dbReference>
<dbReference type="PDB" id="8XGY">
    <property type="method" value="X-ray"/>
    <property type="resolution" value="2.81 A"/>
    <property type="chains" value="A/B/C/D/E/F/G/H/I/J/K/L=33-361"/>
</dbReference>
<dbReference type="PDB" id="9ISD">
    <property type="method" value="X-ray"/>
    <property type="resolution" value="2.37 A"/>
    <property type="chains" value="A/B/C/D/E/F/G/H/I/J/K/L=1-361"/>
</dbReference>
<dbReference type="PDB" id="9IVV">
    <property type="method" value="X-ray"/>
    <property type="resolution" value="2.96 A"/>
    <property type="chains" value="A=33-361"/>
</dbReference>
<dbReference type="PDBsum" id="2AFM"/>
<dbReference type="PDBsum" id="2AFO"/>
<dbReference type="PDBsum" id="2AFS"/>
<dbReference type="PDBsum" id="2AFU"/>
<dbReference type="PDBsum" id="2AFW"/>
<dbReference type="PDBsum" id="2AFX"/>
<dbReference type="PDBsum" id="2AFZ"/>
<dbReference type="PDBsum" id="2ZED"/>
<dbReference type="PDBsum" id="2ZEE"/>
<dbReference type="PDBsum" id="2ZEF"/>
<dbReference type="PDBsum" id="2ZEG"/>
<dbReference type="PDBsum" id="2ZEH"/>
<dbReference type="PDBsum" id="2ZEL"/>
<dbReference type="PDBsum" id="2ZEM"/>
<dbReference type="PDBsum" id="2ZEN"/>
<dbReference type="PDBsum" id="2ZEO"/>
<dbReference type="PDBsum" id="2ZEP"/>
<dbReference type="PDBsum" id="3PBB"/>
<dbReference type="PDBsum" id="3PBE"/>
<dbReference type="PDBsum" id="3SI0"/>
<dbReference type="PDBsum" id="4YU9"/>
<dbReference type="PDBsum" id="4YWY"/>
<dbReference type="PDBsum" id="6GBX"/>
<dbReference type="PDBsum" id="6YI1"/>
<dbReference type="PDBsum" id="6YJY"/>
<dbReference type="PDBsum" id="7CM0"/>
<dbReference type="PDBsum" id="7COZ"/>
<dbReference type="PDBsum" id="7CP0"/>
<dbReference type="PDBsum" id="7D8E"/>
<dbReference type="PDBsum" id="8HY3"/>
<dbReference type="PDBsum" id="8XGB"/>
<dbReference type="PDBsum" id="8XGT"/>
<dbReference type="PDBsum" id="8XGY"/>
<dbReference type="PDBsum" id="9ISD"/>
<dbReference type="PDBsum" id="9IVV"/>
<dbReference type="SMR" id="Q16769"/>
<dbReference type="BioGRID" id="117329">
    <property type="interactions" value="47"/>
</dbReference>
<dbReference type="FunCoup" id="Q16769">
    <property type="interactions" value="222"/>
</dbReference>
<dbReference type="IntAct" id="Q16769">
    <property type="interactions" value="27"/>
</dbReference>
<dbReference type="MINT" id="Q16769"/>
<dbReference type="STRING" id="9606.ENSP00000344829"/>
<dbReference type="BindingDB" id="Q16769"/>
<dbReference type="ChEMBL" id="CHEMBL4508"/>
<dbReference type="DrugBank" id="DB04581">
    <property type="generic name" value="1-benzylimidazole"/>
</dbReference>
<dbReference type="DrugBank" id="DB04636">
    <property type="generic name" value="Glutamine t-butyl ester"/>
</dbReference>
<dbReference type="DrugBank" id="DB04622">
    <property type="generic name" value="N-acetylhistamine"/>
</dbReference>
<dbReference type="DrugBank" id="DB18785">
    <property type="generic name" value="Varoglutamstat"/>
</dbReference>
<dbReference type="GuidetoPHARMACOLOGY" id="2411"/>
<dbReference type="MEROPS" id="M28.974"/>
<dbReference type="GlyCosmos" id="Q16769">
    <property type="glycosylation" value="2 sites, No reported glycans"/>
</dbReference>
<dbReference type="GlyGen" id="Q16769">
    <property type="glycosylation" value="5 sites, 11 N-linked glycans (2 sites), 1 O-linked glycan (3 sites)"/>
</dbReference>
<dbReference type="iPTMnet" id="Q16769"/>
<dbReference type="PhosphoSitePlus" id="Q16769"/>
<dbReference type="BioMuta" id="QPCT"/>
<dbReference type="DMDM" id="2498824"/>
<dbReference type="CPTAC" id="CPTAC-1301"/>
<dbReference type="jPOST" id="Q16769"/>
<dbReference type="MassIVE" id="Q16769"/>
<dbReference type="PaxDb" id="9606-ENSP00000344829"/>
<dbReference type="PeptideAtlas" id="Q16769"/>
<dbReference type="ProteomicsDB" id="61056">
    <molecule id="Q16769-1"/>
</dbReference>
<dbReference type="ProteomicsDB" id="61057">
    <molecule id="Q16769-2"/>
</dbReference>
<dbReference type="TopDownProteomics" id="Q16769-2">
    <molecule id="Q16769-2"/>
</dbReference>
<dbReference type="Antibodypedia" id="1981">
    <property type="antibodies" value="230 antibodies from 29 providers"/>
</dbReference>
<dbReference type="DNASU" id="25797"/>
<dbReference type="Ensembl" id="ENST00000338415.8">
    <molecule id="Q16769-1"/>
    <property type="protein sequence ID" value="ENSP00000344829.3"/>
    <property type="gene ID" value="ENSG00000115828.17"/>
</dbReference>
<dbReference type="GeneID" id="25797"/>
<dbReference type="KEGG" id="hsa:25797"/>
<dbReference type="MANE-Select" id="ENST00000338415.8">
    <property type="protein sequence ID" value="ENSP00000344829.3"/>
    <property type="RefSeq nucleotide sequence ID" value="NM_012413.4"/>
    <property type="RefSeq protein sequence ID" value="NP_036545.1"/>
</dbReference>
<dbReference type="UCSC" id="uc002rqg.4">
    <molecule id="Q16769-1"/>
    <property type="organism name" value="human"/>
</dbReference>
<dbReference type="AGR" id="HGNC:9753"/>
<dbReference type="CTD" id="25797"/>
<dbReference type="DisGeNET" id="25797"/>
<dbReference type="GeneCards" id="QPCT"/>
<dbReference type="HGNC" id="HGNC:9753">
    <property type="gene designation" value="QPCT"/>
</dbReference>
<dbReference type="HPA" id="ENSG00000115828">
    <property type="expression patterns" value="Tissue enhanced (adrenal gland, epididymis)"/>
</dbReference>
<dbReference type="MIM" id="607065">
    <property type="type" value="gene"/>
</dbReference>
<dbReference type="neXtProt" id="NX_Q16769"/>
<dbReference type="OpenTargets" id="ENSG00000115828"/>
<dbReference type="PharmGKB" id="PA34095"/>
<dbReference type="VEuPathDB" id="HostDB:ENSG00000115828"/>
<dbReference type="eggNOG" id="KOG3946">
    <property type="taxonomic scope" value="Eukaryota"/>
</dbReference>
<dbReference type="GeneTree" id="ENSGT00390000003107"/>
<dbReference type="HOGENOM" id="CLU_045003_1_0_1"/>
<dbReference type="InParanoid" id="Q16769"/>
<dbReference type="OMA" id="THWAYQK"/>
<dbReference type="OrthoDB" id="3907302at2759"/>
<dbReference type="PAN-GO" id="Q16769">
    <property type="GO annotations" value="3 GO annotations based on evolutionary models"/>
</dbReference>
<dbReference type="PhylomeDB" id="Q16769"/>
<dbReference type="TreeFam" id="TF315071"/>
<dbReference type="BioCyc" id="MetaCyc:HS03941-MONOMER"/>
<dbReference type="BRENDA" id="2.3.2.5">
    <property type="organism ID" value="2681"/>
</dbReference>
<dbReference type="PathwayCommons" id="Q16769"/>
<dbReference type="Reactome" id="R-HSA-6798695">
    <property type="pathway name" value="Neutrophil degranulation"/>
</dbReference>
<dbReference type="SignaLink" id="Q16769"/>
<dbReference type="BioGRID-ORCS" id="25797">
    <property type="hits" value="12 hits in 1148 CRISPR screens"/>
</dbReference>
<dbReference type="ChiTaRS" id="QPCT">
    <property type="organism name" value="human"/>
</dbReference>
<dbReference type="EvolutionaryTrace" id="Q16769"/>
<dbReference type="GeneWiki" id="QPCT"/>
<dbReference type="GenomeRNAi" id="25797"/>
<dbReference type="Pharos" id="Q16769">
    <property type="development level" value="Tchem"/>
</dbReference>
<dbReference type="PRO" id="PR:Q16769"/>
<dbReference type="Proteomes" id="UP000005640">
    <property type="component" value="Chromosome 2"/>
</dbReference>
<dbReference type="RNAct" id="Q16769">
    <property type="molecule type" value="protein"/>
</dbReference>
<dbReference type="Bgee" id="ENSG00000115828">
    <property type="expression patterns" value="Expressed in right adrenal gland cortex and 172 other cell types or tissues"/>
</dbReference>
<dbReference type="ExpressionAtlas" id="Q16769">
    <property type="expression patterns" value="baseline and differential"/>
</dbReference>
<dbReference type="GO" id="GO:0070062">
    <property type="term" value="C:extracellular exosome"/>
    <property type="evidence" value="ECO:0007005"/>
    <property type="project" value="UniProtKB"/>
</dbReference>
<dbReference type="GO" id="GO:0005576">
    <property type="term" value="C:extracellular region"/>
    <property type="evidence" value="ECO:0000304"/>
    <property type="project" value="Reactome"/>
</dbReference>
<dbReference type="GO" id="GO:1904813">
    <property type="term" value="C:ficolin-1-rich granule lumen"/>
    <property type="evidence" value="ECO:0000304"/>
    <property type="project" value="Reactome"/>
</dbReference>
<dbReference type="GO" id="GO:0035580">
    <property type="term" value="C:specific granule lumen"/>
    <property type="evidence" value="ECO:0000304"/>
    <property type="project" value="Reactome"/>
</dbReference>
<dbReference type="GO" id="GO:1904724">
    <property type="term" value="C:tertiary granule lumen"/>
    <property type="evidence" value="ECO:0000304"/>
    <property type="project" value="Reactome"/>
</dbReference>
<dbReference type="GO" id="GO:0016603">
    <property type="term" value="F:glutaminyl-peptide cyclotransferase activity"/>
    <property type="evidence" value="ECO:0000314"/>
    <property type="project" value="UniProtKB"/>
</dbReference>
<dbReference type="GO" id="GO:0008270">
    <property type="term" value="F:zinc ion binding"/>
    <property type="evidence" value="ECO:0000314"/>
    <property type="project" value="UniProtKB"/>
</dbReference>
<dbReference type="GO" id="GO:0017186">
    <property type="term" value="P:peptidyl-pyroglutamic acid biosynthetic process, using glutaminyl-peptide cyclotransferase"/>
    <property type="evidence" value="ECO:0000314"/>
    <property type="project" value="UniProtKB"/>
</dbReference>
<dbReference type="GO" id="GO:0036211">
    <property type="term" value="P:protein modification process"/>
    <property type="evidence" value="ECO:0000304"/>
    <property type="project" value="ProtInc"/>
</dbReference>
<dbReference type="CDD" id="cd03880">
    <property type="entry name" value="M28_QC_like"/>
    <property type="match status" value="1"/>
</dbReference>
<dbReference type="FunFam" id="3.40.630.10:FF:000029">
    <property type="entry name" value="Glutaminyl-peptide cyclotransferase"/>
    <property type="match status" value="1"/>
</dbReference>
<dbReference type="Gene3D" id="3.40.630.10">
    <property type="entry name" value="Zn peptidases"/>
    <property type="match status" value="1"/>
</dbReference>
<dbReference type="InterPro" id="IPR037457">
    <property type="entry name" value="M28_QC"/>
</dbReference>
<dbReference type="InterPro" id="IPR007484">
    <property type="entry name" value="Peptidase_M28"/>
</dbReference>
<dbReference type="InterPro" id="IPR040234">
    <property type="entry name" value="QC/QCL"/>
</dbReference>
<dbReference type="PANTHER" id="PTHR12283">
    <property type="entry name" value="GLUTAMINYL-PEPTIDE CYCLOTRANSFERASE"/>
    <property type="match status" value="1"/>
</dbReference>
<dbReference type="PANTHER" id="PTHR12283:SF5">
    <property type="entry name" value="GLUTAMINYL-PEPTIDE CYCLOTRANSFERASE"/>
    <property type="match status" value="1"/>
</dbReference>
<dbReference type="Pfam" id="PF04389">
    <property type="entry name" value="Peptidase_M28"/>
    <property type="match status" value="1"/>
</dbReference>
<dbReference type="SUPFAM" id="SSF53187">
    <property type="entry name" value="Zn-dependent exopeptidases"/>
    <property type="match status" value="1"/>
</dbReference>
<name>QPCT_HUMAN</name>
<keyword id="KW-0002">3D-structure</keyword>
<keyword id="KW-0012">Acyltransferase</keyword>
<keyword id="KW-0025">Alternative splicing</keyword>
<keyword id="KW-1015">Disulfide bond</keyword>
<keyword id="KW-0325">Glycoprotein</keyword>
<keyword id="KW-0479">Metal-binding</keyword>
<keyword id="KW-1267">Proteomics identification</keyword>
<keyword id="KW-1185">Reference proteome</keyword>
<keyword id="KW-0964">Secreted</keyword>
<keyword id="KW-0732">Signal</keyword>
<keyword id="KW-0808">Transferase</keyword>
<keyword id="KW-0862">Zinc</keyword>
<proteinExistence type="evidence at protein level"/>
<feature type="signal peptide" evidence="2">
    <location>
        <begin position="1"/>
        <end position="28"/>
    </location>
</feature>
<feature type="chain" id="PRO_0000022195" description="Glutaminyl-peptide cyclotransferase">
    <location>
        <begin position="29"/>
        <end position="361"/>
    </location>
</feature>
<feature type="active site" description="Proton acceptor" evidence="6">
    <location>
        <position position="201"/>
    </location>
</feature>
<feature type="active site" description="Proton acceptor" evidence="6">
    <location>
        <position position="248"/>
    </location>
</feature>
<feature type="binding site" evidence="5 6 8 9 11 12 13 14 15 16 17 18 19 20 21 22 23 24 25 26 27 28 29 30 31 32">
    <location>
        <position position="159"/>
    </location>
    <ligand>
        <name>Zn(2+)</name>
        <dbReference type="ChEBI" id="CHEBI:29105"/>
    </ligand>
</feature>
<feature type="binding site" evidence="5 6 8 9 11 12 13 14 15 16 17 18 19 20 21 22 23 24 25 26 27 28 29 30 31 32">
    <location>
        <position position="202"/>
    </location>
    <ligand>
        <name>Zn(2+)</name>
        <dbReference type="ChEBI" id="CHEBI:29105"/>
    </ligand>
</feature>
<feature type="binding site" evidence="5 6 8 9 11 12 13 14 15 16 17 18 19 20 21 22 23 24 25 26 27 28 29 30 31 32">
    <location>
        <position position="330"/>
    </location>
    <ligand>
        <name>Zn(2+)</name>
        <dbReference type="ChEBI" id="CHEBI:29105"/>
    </ligand>
</feature>
<feature type="glycosylation site" description="N-linked (GlcNAc...) asparagine" evidence="9">
    <location>
        <position position="49"/>
    </location>
</feature>
<feature type="glycosylation site" description="N-linked (GlcNAc...) asparagine" evidence="2">
    <location>
        <position position="296"/>
    </location>
</feature>
<feature type="disulfide bond" evidence="9">
    <location>
        <begin position="139"/>
        <end position="164"/>
    </location>
</feature>
<feature type="splice variant" id="VSP_038487" description="In isoform 2." evidence="10">
    <location>
        <begin position="41"/>
        <end position="89"/>
    </location>
</feature>
<feature type="sequence variant" id="VAR_053956" description="Lowers activity by approximately 30%; dbSNP:rs2255991." evidence="5">
    <original>R</original>
    <variation>W</variation>
    <location>
        <position position="54"/>
    </location>
</feature>
<feature type="sequence variant" id="VAR_005569" description="In dbSNP:rs895245310.">
    <original>Q</original>
    <variation>R</variation>
    <location>
        <position position="71"/>
    </location>
</feature>
<feature type="sequence variant" id="VAR_053957" description="In dbSNP:rs4670696." evidence="4">
    <original>H</original>
    <variation>P</variation>
    <location>
        <position position="360"/>
    </location>
</feature>
<feature type="mutagenesis site" description="Lowers activity by approximately 40%." evidence="5">
    <original>K</original>
    <variation>A</variation>
    <location>
        <position position="144"/>
    </location>
</feature>
<feature type="mutagenesis site" description="Lowers activity by approximately 30%." evidence="5">
    <original>F</original>
    <variation>A</variation>
    <location>
        <position position="146"/>
    </location>
</feature>
<feature type="mutagenesis site" description="Reduces activity by about 50%." evidence="6">
    <original>S</original>
    <variation>A</variation>
    <location>
        <position position="160"/>
    </location>
</feature>
<feature type="mutagenesis site" description="Reduces activity by 96%." evidence="6">
    <original>S</original>
    <variation>G</variation>
    <location>
        <position position="160"/>
    </location>
</feature>
<feature type="mutagenesis site" description="Reduces activity by about 98%." evidence="5 6">
    <original>E</original>
    <variation>D</variation>
    <location>
        <position position="201"/>
    </location>
</feature>
<feature type="mutagenesis site" description="Abolishes activity." evidence="5 6">
    <original>E</original>
    <variation>L</variation>
    <variation>Q</variation>
    <location>
        <position position="201"/>
    </location>
</feature>
<feature type="mutagenesis site" description="Greatly lowers activity." evidence="5">
    <original>W</original>
    <variation>L</variation>
    <location>
        <position position="207"/>
    </location>
</feature>
<feature type="mutagenesis site" description="Reduces activity by 99%." evidence="5 6">
    <original>D</original>
    <variation>A</variation>
    <location>
        <position position="248"/>
    </location>
</feature>
<feature type="mutagenesis site" description="Abolishes activity." evidence="5 6">
    <original>D</original>
    <variation>Q</variation>
    <location>
        <position position="248"/>
    </location>
</feature>
<feature type="mutagenesis site" description="Lowers activity by approximately 35%." evidence="5">
    <original>Q</original>
    <variation>L</variation>
    <location>
        <position position="304"/>
    </location>
</feature>
<feature type="mutagenesis site" description="Abolishes activity." evidence="5 6">
    <original>D</original>
    <variation>A</variation>
    <variation>E</variation>
    <variation>L</variation>
    <location>
        <position position="305"/>
    </location>
</feature>
<feature type="mutagenesis site" description="Reduces activity by 99%." evidence="5 6">
    <original>D</original>
    <variation>N</variation>
    <location>
        <position position="305"/>
    </location>
</feature>
<feature type="mutagenesis site" description="Reduces activity by 87%." evidence="6">
    <original>H</original>
    <variation>L</variation>
    <location>
        <position position="319"/>
    </location>
</feature>
<feature type="mutagenesis site" description="Greatly lowers activity." evidence="5">
    <original>F</original>
    <variation>A</variation>
    <location>
        <position position="325"/>
    </location>
</feature>
<feature type="mutagenesis site" description="Abolishes activity." evidence="5">
    <original>W</original>
    <variation>A</variation>
    <location>
        <position position="329"/>
    </location>
</feature>
<feature type="helix" evidence="34">
    <location>
        <begin position="36"/>
        <end position="38"/>
    </location>
</feature>
<feature type="helix" evidence="34">
    <location>
        <begin position="39"/>
        <end position="42"/>
    </location>
</feature>
<feature type="helix" evidence="34">
    <location>
        <begin position="50"/>
        <end position="59"/>
    </location>
</feature>
<feature type="helix" evidence="34">
    <location>
        <begin position="62"/>
        <end position="68"/>
    </location>
</feature>
<feature type="helix" evidence="34">
    <location>
        <begin position="71"/>
        <end position="73"/>
    </location>
</feature>
<feature type="helix" evidence="34">
    <location>
        <begin position="82"/>
        <end position="96"/>
    </location>
</feature>
<feature type="strand" evidence="34">
    <location>
        <begin position="98"/>
        <end position="100"/>
    </location>
</feature>
<feature type="strand" evidence="34">
    <location>
        <begin position="103"/>
        <end position="111"/>
    </location>
</feature>
<feature type="strand" evidence="34">
    <location>
        <begin position="116"/>
        <end position="128"/>
    </location>
</feature>
<feature type="strand" evidence="34">
    <location>
        <begin position="131"/>
        <end position="140"/>
    </location>
</feature>
<feature type="helix" evidence="35">
    <location>
        <begin position="149"/>
        <end position="151"/>
    </location>
</feature>
<feature type="turn" evidence="34">
    <location>
        <begin position="157"/>
        <end position="160"/>
    </location>
</feature>
<feature type="helix" evidence="34">
    <location>
        <begin position="161"/>
        <end position="173"/>
    </location>
</feature>
<feature type="helix" evidence="34">
    <location>
        <begin position="175"/>
        <end position="179"/>
    </location>
</feature>
<feature type="helix" evidence="37">
    <location>
        <begin position="180"/>
        <end position="182"/>
    </location>
</feature>
<feature type="strand" evidence="34">
    <location>
        <begin position="191"/>
        <end position="199"/>
    </location>
</feature>
<feature type="strand" evidence="34">
    <location>
        <begin position="204"/>
        <end position="206"/>
    </location>
</feature>
<feature type="strand" evidence="34">
    <location>
        <begin position="209"/>
        <end position="212"/>
    </location>
</feature>
<feature type="helix" evidence="34">
    <location>
        <begin position="214"/>
        <end position="224"/>
    </location>
</feature>
<feature type="strand" evidence="34">
    <location>
        <begin position="226"/>
        <end position="229"/>
    </location>
</feature>
<feature type="turn" evidence="34">
    <location>
        <begin position="237"/>
        <end position="240"/>
    </location>
</feature>
<feature type="strand" evidence="34">
    <location>
        <begin position="241"/>
        <end position="247"/>
    </location>
</feature>
<feature type="strand" evidence="34">
    <location>
        <begin position="252"/>
        <end position="254"/>
    </location>
</feature>
<feature type="strand" evidence="36">
    <location>
        <begin position="257"/>
        <end position="259"/>
    </location>
</feature>
<feature type="helix" evidence="34">
    <location>
        <begin position="262"/>
        <end position="264"/>
    </location>
</feature>
<feature type="helix" evidence="34">
    <location>
        <begin position="265"/>
        <end position="280"/>
    </location>
</feature>
<feature type="strand" evidence="34">
    <location>
        <begin position="284"/>
        <end position="286"/>
    </location>
</feature>
<feature type="helix" evidence="38">
    <location>
        <begin position="289"/>
        <end position="291"/>
    </location>
</feature>
<feature type="strand" evidence="35">
    <location>
        <begin position="293"/>
        <end position="295"/>
    </location>
</feature>
<feature type="helix" evidence="34">
    <location>
        <begin position="308"/>
        <end position="311"/>
    </location>
</feature>
<feature type="turn" evidence="34">
    <location>
        <begin position="312"/>
        <end position="314"/>
    </location>
</feature>
<feature type="strand" evidence="34">
    <location>
        <begin position="317"/>
        <end position="320"/>
    </location>
</feature>
<feature type="turn" evidence="34">
    <location>
        <begin position="327"/>
        <end position="330"/>
    </location>
</feature>
<feature type="helix" evidence="33">
    <location>
        <begin position="336"/>
        <end position="338"/>
    </location>
</feature>
<feature type="helix" evidence="34">
    <location>
        <begin position="341"/>
        <end position="359"/>
    </location>
</feature>
<accession>Q16769</accession>
<accession>Q16770</accession>
<accession>Q3KRG6</accession>
<accession>Q53TR4</accession>
<protein>
    <recommendedName>
        <fullName>Glutaminyl-peptide cyclotransferase</fullName>
        <ecNumber>2.3.2.5</ecNumber>
    </recommendedName>
    <alternativeName>
        <fullName>Glutaminyl cyclase</fullName>
        <shortName>QC</shortName>
        <shortName>sQC</shortName>
    </alternativeName>
    <alternativeName>
        <fullName>Glutaminyl-tRNA cyclotransferase</fullName>
    </alternativeName>
    <alternativeName>
        <fullName>Glutamyl cyclase</fullName>
        <shortName>EC</shortName>
    </alternativeName>
</protein>
<gene>
    <name type="primary">QPCT</name>
</gene>